<accession>P28753</accession>
<name>YQGE_BACCA</name>
<dbReference type="EMBL" id="X62682">
    <property type="protein sequence ID" value="CAA44557.1"/>
    <property type="molecule type" value="Genomic_DNA"/>
</dbReference>
<dbReference type="PIR" id="S22054">
    <property type="entry name" value="S22054"/>
</dbReference>
<dbReference type="SMR" id="P28753"/>
<sequence length="37" mass="4139">MAFFQKLTGQEQVNRDLLLLLCIGGFYTLGVSLSNTF</sequence>
<reference key="1">
    <citation type="journal article" date="1992" name="FEMS Microbiol. Lett.">
        <title>Physical characterisation and over-expression of the Bacillus caldotenax superoxide dismutase gene.</title>
        <authorList>
            <person name="Chambers S.P."/>
            <person name="Brehm J.K."/>
            <person name="Michael N.P."/>
            <person name="Atkinson T."/>
            <person name="Minton N.P."/>
        </authorList>
    </citation>
    <scope>NUCLEOTIDE SEQUENCE [GENOMIC DNA]</scope>
    <source>
        <strain>YT1</strain>
    </source>
</reference>
<organism>
    <name type="scientific">Bacillus caldotenax</name>
    <dbReference type="NCBI Taxonomy" id="1395"/>
    <lineage>
        <taxon>Bacteria</taxon>
        <taxon>Bacillati</taxon>
        <taxon>Bacillota</taxon>
        <taxon>Bacilli</taxon>
        <taxon>Bacillales</taxon>
        <taxon>Anoxybacillaceae</taxon>
        <taxon>Geobacillus</taxon>
        <taxon>Geobacillus thermoleovorans group</taxon>
    </lineage>
</organism>
<feature type="chain" id="PRO_0000049808" description="Uncharacterized protein in sodM 3'region">
    <location>
        <begin position="1"/>
        <end position="37" status="greater than"/>
    </location>
</feature>
<feature type="non-terminal residue">
    <location>
        <position position="37"/>
    </location>
</feature>
<proteinExistence type="predicted"/>
<protein>
    <recommendedName>
        <fullName>Uncharacterized protein in sodM 3'region</fullName>
    </recommendedName>
    <alternativeName>
        <fullName>ORFB</fullName>
    </alternativeName>
</protein>